<keyword id="KW-0028">Amino-acid biosynthesis</keyword>
<keyword id="KW-0057">Aromatic amino acid biosynthesis</keyword>
<keyword id="KW-0170">Cobalt</keyword>
<keyword id="KW-0963">Cytoplasm</keyword>
<keyword id="KW-0456">Lyase</keyword>
<keyword id="KW-0479">Metal-binding</keyword>
<keyword id="KW-0520">NAD</keyword>
<keyword id="KW-0547">Nucleotide-binding</keyword>
<keyword id="KW-1185">Reference proteome</keyword>
<keyword id="KW-0862">Zinc</keyword>
<name>AROB_BURMA</name>
<reference key="1">
    <citation type="journal article" date="2004" name="Proc. Natl. Acad. Sci. U.S.A.">
        <title>Structural flexibility in the Burkholderia mallei genome.</title>
        <authorList>
            <person name="Nierman W.C."/>
            <person name="DeShazer D."/>
            <person name="Kim H.S."/>
            <person name="Tettelin H."/>
            <person name="Nelson K.E."/>
            <person name="Feldblyum T.V."/>
            <person name="Ulrich R.L."/>
            <person name="Ronning C.M."/>
            <person name="Brinkac L.M."/>
            <person name="Daugherty S.C."/>
            <person name="Davidsen T.D."/>
            <person name="DeBoy R.T."/>
            <person name="Dimitrov G."/>
            <person name="Dodson R.J."/>
            <person name="Durkin A.S."/>
            <person name="Gwinn M.L."/>
            <person name="Haft D.H."/>
            <person name="Khouri H.M."/>
            <person name="Kolonay J.F."/>
            <person name="Madupu R."/>
            <person name="Mohammoud Y."/>
            <person name="Nelson W.C."/>
            <person name="Radune D."/>
            <person name="Romero C.M."/>
            <person name="Sarria S."/>
            <person name="Selengut J."/>
            <person name="Shamblin C."/>
            <person name="Sullivan S.A."/>
            <person name="White O."/>
            <person name="Yu Y."/>
            <person name="Zafar N."/>
            <person name="Zhou L."/>
            <person name="Fraser C.M."/>
        </authorList>
    </citation>
    <scope>NUCLEOTIDE SEQUENCE [LARGE SCALE GENOMIC DNA]</scope>
    <source>
        <strain>ATCC 23344</strain>
    </source>
</reference>
<comment type="function">
    <text evidence="1">Catalyzes the conversion of 3-deoxy-D-arabino-heptulosonate 7-phosphate (DAHP) to dehydroquinate (DHQ).</text>
</comment>
<comment type="catalytic activity">
    <reaction evidence="1">
        <text>7-phospho-2-dehydro-3-deoxy-D-arabino-heptonate = 3-dehydroquinate + phosphate</text>
        <dbReference type="Rhea" id="RHEA:21968"/>
        <dbReference type="ChEBI" id="CHEBI:32364"/>
        <dbReference type="ChEBI" id="CHEBI:43474"/>
        <dbReference type="ChEBI" id="CHEBI:58394"/>
        <dbReference type="EC" id="4.2.3.4"/>
    </reaction>
</comment>
<comment type="cofactor">
    <cofactor evidence="1">
        <name>Co(2+)</name>
        <dbReference type="ChEBI" id="CHEBI:48828"/>
    </cofactor>
    <cofactor evidence="1">
        <name>Zn(2+)</name>
        <dbReference type="ChEBI" id="CHEBI:29105"/>
    </cofactor>
    <text evidence="1">Binds 1 divalent metal cation per subunit. Can use either Co(2+) or Zn(2+).</text>
</comment>
<comment type="cofactor">
    <cofactor evidence="1">
        <name>NAD(+)</name>
        <dbReference type="ChEBI" id="CHEBI:57540"/>
    </cofactor>
</comment>
<comment type="pathway">
    <text evidence="1">Metabolic intermediate biosynthesis; chorismate biosynthesis; chorismate from D-erythrose 4-phosphate and phosphoenolpyruvate: step 2/7.</text>
</comment>
<comment type="subcellular location">
    <subcellularLocation>
        <location evidence="1">Cytoplasm</location>
    </subcellularLocation>
</comment>
<comment type="similarity">
    <text evidence="1">Belongs to the sugar phosphate cyclases superfamily. Dehydroquinate synthase family.</text>
</comment>
<evidence type="ECO:0000255" key="1">
    <source>
        <dbReference type="HAMAP-Rule" id="MF_00110"/>
    </source>
</evidence>
<gene>
    <name evidence="1" type="primary">aroB</name>
    <name type="ordered locus">BMA2746</name>
</gene>
<sequence>MITVNVDLGERAYPIHIGADLIGRTELFAPHIAGASVTIVTNTTVEPLYGDTLRAALAPLGKRVSTVVLPDGEAYKNWETLNLIFDGLLEQHADRKTTLIALGGGVIGDMTGFAAACYMRGVPFIQVPTTLLSQVDSSVGGKTGINHPLGKNMIGAFYQPQAVIADIGALSTLPDRELAAGVAEIVKTGAIADAAFFDWIEANVGALTRRDPDALAHAVKRSCEIKAGVVAADEREGGLRAILNFGHTFGHAIEAGLGYGEWLHGEAVGCGMVMAADLSVRTGHLDEASRARLCRVVEAAHLPTRAPDLGDARYVELMRVDKKAEAGAIKFILLKRFGETIITPAPDDAVLATLAATTR</sequence>
<protein>
    <recommendedName>
        <fullName evidence="1">3-dehydroquinate synthase</fullName>
        <shortName evidence="1">DHQS</shortName>
        <ecNumber evidence="1">4.2.3.4</ecNumber>
    </recommendedName>
</protein>
<organism>
    <name type="scientific">Burkholderia mallei (strain ATCC 23344)</name>
    <dbReference type="NCBI Taxonomy" id="243160"/>
    <lineage>
        <taxon>Bacteria</taxon>
        <taxon>Pseudomonadati</taxon>
        <taxon>Pseudomonadota</taxon>
        <taxon>Betaproteobacteria</taxon>
        <taxon>Burkholderiales</taxon>
        <taxon>Burkholderiaceae</taxon>
        <taxon>Burkholderia</taxon>
        <taxon>pseudomallei group</taxon>
    </lineage>
</organism>
<feature type="chain" id="PRO_0000231073" description="3-dehydroquinate synthase">
    <location>
        <begin position="1"/>
        <end position="359"/>
    </location>
</feature>
<feature type="binding site" evidence="1">
    <location>
        <begin position="71"/>
        <end position="76"/>
    </location>
    <ligand>
        <name>NAD(+)</name>
        <dbReference type="ChEBI" id="CHEBI:57540"/>
    </ligand>
</feature>
<feature type="binding site" evidence="1">
    <location>
        <begin position="105"/>
        <end position="109"/>
    </location>
    <ligand>
        <name>NAD(+)</name>
        <dbReference type="ChEBI" id="CHEBI:57540"/>
    </ligand>
</feature>
<feature type="binding site" evidence="1">
    <location>
        <begin position="129"/>
        <end position="130"/>
    </location>
    <ligand>
        <name>NAD(+)</name>
        <dbReference type="ChEBI" id="CHEBI:57540"/>
    </ligand>
</feature>
<feature type="binding site" evidence="1">
    <location>
        <position position="142"/>
    </location>
    <ligand>
        <name>NAD(+)</name>
        <dbReference type="ChEBI" id="CHEBI:57540"/>
    </ligand>
</feature>
<feature type="binding site" evidence="1">
    <location>
        <position position="151"/>
    </location>
    <ligand>
        <name>NAD(+)</name>
        <dbReference type="ChEBI" id="CHEBI:57540"/>
    </ligand>
</feature>
<feature type="binding site" evidence="1">
    <location>
        <position position="184"/>
    </location>
    <ligand>
        <name>Zn(2+)</name>
        <dbReference type="ChEBI" id="CHEBI:29105"/>
    </ligand>
</feature>
<feature type="binding site" evidence="1">
    <location>
        <position position="247"/>
    </location>
    <ligand>
        <name>Zn(2+)</name>
        <dbReference type="ChEBI" id="CHEBI:29105"/>
    </ligand>
</feature>
<feature type="binding site" evidence="1">
    <location>
        <position position="264"/>
    </location>
    <ligand>
        <name>Zn(2+)</name>
        <dbReference type="ChEBI" id="CHEBI:29105"/>
    </ligand>
</feature>
<accession>Q62GB0</accession>
<proteinExistence type="inferred from homology"/>
<dbReference type="EC" id="4.2.3.4" evidence="1"/>
<dbReference type="EMBL" id="CP000010">
    <property type="protein sequence ID" value="AAU48310.1"/>
    <property type="molecule type" value="Genomic_DNA"/>
</dbReference>
<dbReference type="RefSeq" id="WP_004196751.1">
    <property type="nucleotide sequence ID" value="NC_006348.1"/>
</dbReference>
<dbReference type="RefSeq" id="YP_104264.1">
    <property type="nucleotide sequence ID" value="NC_006348.1"/>
</dbReference>
<dbReference type="SMR" id="Q62GB0"/>
<dbReference type="GeneID" id="92980425"/>
<dbReference type="KEGG" id="bma:BMA2746"/>
<dbReference type="PATRIC" id="fig|243160.12.peg.2815"/>
<dbReference type="eggNOG" id="COG0337">
    <property type="taxonomic scope" value="Bacteria"/>
</dbReference>
<dbReference type="HOGENOM" id="CLU_001201_0_2_4"/>
<dbReference type="UniPathway" id="UPA00053">
    <property type="reaction ID" value="UER00085"/>
</dbReference>
<dbReference type="Proteomes" id="UP000006693">
    <property type="component" value="Chromosome 1"/>
</dbReference>
<dbReference type="GO" id="GO:0005737">
    <property type="term" value="C:cytoplasm"/>
    <property type="evidence" value="ECO:0007669"/>
    <property type="project" value="UniProtKB-SubCell"/>
</dbReference>
<dbReference type="GO" id="GO:0003856">
    <property type="term" value="F:3-dehydroquinate synthase activity"/>
    <property type="evidence" value="ECO:0007669"/>
    <property type="project" value="UniProtKB-UniRule"/>
</dbReference>
<dbReference type="GO" id="GO:0046872">
    <property type="term" value="F:metal ion binding"/>
    <property type="evidence" value="ECO:0007669"/>
    <property type="project" value="UniProtKB-KW"/>
</dbReference>
<dbReference type="GO" id="GO:0000166">
    <property type="term" value="F:nucleotide binding"/>
    <property type="evidence" value="ECO:0007669"/>
    <property type="project" value="UniProtKB-KW"/>
</dbReference>
<dbReference type="GO" id="GO:0008652">
    <property type="term" value="P:amino acid biosynthetic process"/>
    <property type="evidence" value="ECO:0007669"/>
    <property type="project" value="UniProtKB-KW"/>
</dbReference>
<dbReference type="GO" id="GO:0009073">
    <property type="term" value="P:aromatic amino acid family biosynthetic process"/>
    <property type="evidence" value="ECO:0007669"/>
    <property type="project" value="UniProtKB-KW"/>
</dbReference>
<dbReference type="GO" id="GO:0009423">
    <property type="term" value="P:chorismate biosynthetic process"/>
    <property type="evidence" value="ECO:0007669"/>
    <property type="project" value="UniProtKB-UniRule"/>
</dbReference>
<dbReference type="CDD" id="cd08195">
    <property type="entry name" value="DHQS"/>
    <property type="match status" value="1"/>
</dbReference>
<dbReference type="FunFam" id="3.40.50.1970:FF:000001">
    <property type="entry name" value="3-dehydroquinate synthase"/>
    <property type="match status" value="1"/>
</dbReference>
<dbReference type="Gene3D" id="3.40.50.1970">
    <property type="match status" value="1"/>
</dbReference>
<dbReference type="Gene3D" id="1.20.1090.10">
    <property type="entry name" value="Dehydroquinate synthase-like - alpha domain"/>
    <property type="match status" value="1"/>
</dbReference>
<dbReference type="HAMAP" id="MF_00110">
    <property type="entry name" value="DHQ_synthase"/>
    <property type="match status" value="1"/>
</dbReference>
<dbReference type="InterPro" id="IPR050071">
    <property type="entry name" value="Dehydroquinate_synthase"/>
</dbReference>
<dbReference type="InterPro" id="IPR016037">
    <property type="entry name" value="DHQ_synth_AroB"/>
</dbReference>
<dbReference type="InterPro" id="IPR030963">
    <property type="entry name" value="DHQ_synth_fam"/>
</dbReference>
<dbReference type="InterPro" id="IPR030960">
    <property type="entry name" value="DHQS/DOIS_N"/>
</dbReference>
<dbReference type="InterPro" id="IPR056179">
    <property type="entry name" value="DHQS_C"/>
</dbReference>
<dbReference type="NCBIfam" id="TIGR01357">
    <property type="entry name" value="aroB"/>
    <property type="match status" value="1"/>
</dbReference>
<dbReference type="PANTHER" id="PTHR43622">
    <property type="entry name" value="3-DEHYDROQUINATE SYNTHASE"/>
    <property type="match status" value="1"/>
</dbReference>
<dbReference type="PANTHER" id="PTHR43622:SF7">
    <property type="entry name" value="3-DEHYDROQUINATE SYNTHASE, CHLOROPLASTIC"/>
    <property type="match status" value="1"/>
</dbReference>
<dbReference type="Pfam" id="PF01761">
    <property type="entry name" value="DHQ_synthase"/>
    <property type="match status" value="1"/>
</dbReference>
<dbReference type="Pfam" id="PF24621">
    <property type="entry name" value="DHQS_C"/>
    <property type="match status" value="1"/>
</dbReference>
<dbReference type="PIRSF" id="PIRSF001455">
    <property type="entry name" value="DHQ_synth"/>
    <property type="match status" value="1"/>
</dbReference>
<dbReference type="SUPFAM" id="SSF56796">
    <property type="entry name" value="Dehydroquinate synthase-like"/>
    <property type="match status" value="1"/>
</dbReference>